<comment type="function">
    <text evidence="1">Part of the Sec protein translocase complex. Interacts with the SecYEG preprotein conducting channel. Has a central role in coupling the hydrolysis of ATP to the transfer of proteins into and across the cell membrane, serving both as a receptor for the preprotein-SecB complex and as an ATP-driven molecular motor driving the stepwise translocation of polypeptide chains across the membrane.</text>
</comment>
<comment type="catalytic activity">
    <reaction evidence="1">
        <text>ATP + H2O + cellular proteinSide 1 = ADP + phosphate + cellular proteinSide 2.</text>
        <dbReference type="EC" id="7.4.2.8"/>
    </reaction>
</comment>
<comment type="cofactor">
    <cofactor evidence="1">
        <name>Zn(2+)</name>
        <dbReference type="ChEBI" id="CHEBI:29105"/>
    </cofactor>
    <text evidence="1">May bind 1 zinc ion per subunit.</text>
</comment>
<comment type="subunit">
    <text evidence="1">Monomer and homodimer. Part of the essential Sec protein translocation apparatus which comprises SecA, SecYEG and auxiliary proteins SecDF-YajC and YidC.</text>
</comment>
<comment type="subcellular location">
    <subcellularLocation>
        <location evidence="1">Cell inner membrane</location>
        <topology evidence="1">Peripheral membrane protein</topology>
        <orientation evidence="1">Cytoplasmic side</orientation>
    </subcellularLocation>
    <subcellularLocation>
        <location evidence="1">Cytoplasm</location>
    </subcellularLocation>
    <text evidence="1">Distribution is 50-50.</text>
</comment>
<comment type="similarity">
    <text evidence="1">Belongs to the SecA family.</text>
</comment>
<sequence>MFTKLMTAIFGSSNDRTLRRLNKRVAQINRLEAEFEKLTDEQLQAKTAEFKQRLAEGATLDSLLHEAFATVREASKRVLGMRHFDVQLIGGMVLTERNIAEMRTGEGKTLTATLPCYLNALTGKGVHVVTVNDYLARRDAETNRPLFEFLGMTVAVNIPGLPSDVKRQAYLADITYATNSELGFDYLRDNLAHSKEERFQRPLHYALVDEVDSILIDEARTPLIISGPAEDATQIYQAIDKVIPHLIAQDKEDTEEYTGDGDFTLDLKSKQAHLTERGQVKVENILTKMGLMHEGESLYHPARISLLHHVYAALRAHKLFEVNVDYIVKDGEIVIIDEHTGRTMAGRRWSDGLHQAIEAKEGVNIQGENQTVASITYQNYFRLYEKLAGMTGTADTEAFEFQQIYGLDTVVIPTNRPMIRDDKTDLMFKSEPEKFQAVIKDIQDCIARKQPVLVGTISIEKSEALSEALKQAGIPHKVLNAKFHAQEAEIVADAGYPGAVTIATNMAGRGTDIVLGGNWKAEIAKLENPTQEQIDEIKAKWQERHDIVMQAGGLHIIGTERHESRRIDNQLRGRSGRQGDPGSSRFYLSLDDALMRIYLNEGKLNMMRKAFTEEGEAMESKLLTKVIASAQAKVEAYNFDGRKQLLQYDDVANEQRKAIYEQRNYLLETDDISAMINTVREDVFNAVIDQYIPPQSIEEMWDVPALENRLKQEFGMELPIVKWLEAEDDLHEETLRERIINIAKEQYQAKEAMVGAEVMRSFEKGVMLQNLDELWKEHLSAMDYLRKGIHLRGYAQKDPKQEYKKESFAMFTDMLDHLKSNVISVLSRIQVRSQEEVEQAERERQAHAEQESSHYHAEGEGQDFSDLHIGRNEPCPCGSGKKYKHCHGSKAKYS</sequence>
<protein>
    <recommendedName>
        <fullName evidence="1">Protein translocase subunit SecA</fullName>
        <ecNumber evidence="1">7.4.2.8</ecNumber>
    </recommendedName>
</protein>
<keyword id="KW-0067">ATP-binding</keyword>
<keyword id="KW-0997">Cell inner membrane</keyword>
<keyword id="KW-1003">Cell membrane</keyword>
<keyword id="KW-0963">Cytoplasm</keyword>
<keyword id="KW-0472">Membrane</keyword>
<keyword id="KW-0479">Metal-binding</keyword>
<keyword id="KW-0547">Nucleotide-binding</keyword>
<keyword id="KW-0653">Protein transport</keyword>
<keyword id="KW-1185">Reference proteome</keyword>
<keyword id="KW-1278">Translocase</keyword>
<keyword id="KW-0811">Translocation</keyword>
<keyword id="KW-0813">Transport</keyword>
<keyword id="KW-0862">Zinc</keyword>
<accession>B8F3L6</accession>
<gene>
    <name evidence="1" type="primary">secA</name>
    <name type="ordered locus">HAPS_0226</name>
</gene>
<feature type="chain" id="PRO_1000184231" description="Protein translocase subunit SecA">
    <location>
        <begin position="1"/>
        <end position="894"/>
    </location>
</feature>
<feature type="region of interest" description="Disordered" evidence="2">
    <location>
        <begin position="836"/>
        <end position="870"/>
    </location>
</feature>
<feature type="binding site" evidence="1">
    <location>
        <position position="87"/>
    </location>
    <ligand>
        <name>ATP</name>
        <dbReference type="ChEBI" id="CHEBI:30616"/>
    </ligand>
</feature>
<feature type="binding site" evidence="1">
    <location>
        <begin position="105"/>
        <end position="109"/>
    </location>
    <ligand>
        <name>ATP</name>
        <dbReference type="ChEBI" id="CHEBI:30616"/>
    </ligand>
</feature>
<feature type="binding site" evidence="1">
    <location>
        <position position="512"/>
    </location>
    <ligand>
        <name>ATP</name>
        <dbReference type="ChEBI" id="CHEBI:30616"/>
    </ligand>
</feature>
<feature type="binding site" evidence="1">
    <location>
        <position position="875"/>
    </location>
    <ligand>
        <name>Zn(2+)</name>
        <dbReference type="ChEBI" id="CHEBI:29105"/>
    </ligand>
</feature>
<feature type="binding site" evidence="1">
    <location>
        <position position="877"/>
    </location>
    <ligand>
        <name>Zn(2+)</name>
        <dbReference type="ChEBI" id="CHEBI:29105"/>
    </ligand>
</feature>
<feature type="binding site" evidence="1">
    <location>
        <position position="886"/>
    </location>
    <ligand>
        <name>Zn(2+)</name>
        <dbReference type="ChEBI" id="CHEBI:29105"/>
    </ligand>
</feature>
<feature type="binding site" evidence="1">
    <location>
        <position position="887"/>
    </location>
    <ligand>
        <name>Zn(2+)</name>
        <dbReference type="ChEBI" id="CHEBI:29105"/>
    </ligand>
</feature>
<evidence type="ECO:0000255" key="1">
    <source>
        <dbReference type="HAMAP-Rule" id="MF_01382"/>
    </source>
</evidence>
<evidence type="ECO:0000256" key="2">
    <source>
        <dbReference type="SAM" id="MobiDB-lite"/>
    </source>
</evidence>
<reference key="1">
    <citation type="journal article" date="2009" name="J. Bacteriol.">
        <title>Complete genome sequence of Haemophilus parasuis SH0165.</title>
        <authorList>
            <person name="Yue M."/>
            <person name="Yang F."/>
            <person name="Yang J."/>
            <person name="Bei W."/>
            <person name="Cai X."/>
            <person name="Chen L."/>
            <person name="Dong J."/>
            <person name="Zhou R."/>
            <person name="Jin M."/>
            <person name="Jin Q."/>
            <person name="Chen H."/>
        </authorList>
    </citation>
    <scope>NUCLEOTIDE SEQUENCE [LARGE SCALE GENOMIC DNA]</scope>
    <source>
        <strain>SH0165</strain>
    </source>
</reference>
<organism>
    <name type="scientific">Glaesserella parasuis serovar 5 (strain SH0165)</name>
    <name type="common">Haemophilus parasuis</name>
    <dbReference type="NCBI Taxonomy" id="557723"/>
    <lineage>
        <taxon>Bacteria</taxon>
        <taxon>Pseudomonadati</taxon>
        <taxon>Pseudomonadota</taxon>
        <taxon>Gammaproteobacteria</taxon>
        <taxon>Pasteurellales</taxon>
        <taxon>Pasteurellaceae</taxon>
        <taxon>Glaesserella</taxon>
    </lineage>
</organism>
<name>SECA_GLAP5</name>
<proteinExistence type="inferred from homology"/>
<dbReference type="EC" id="7.4.2.8" evidence="1"/>
<dbReference type="EMBL" id="CP001321">
    <property type="protein sequence ID" value="ACL31918.1"/>
    <property type="molecule type" value="Genomic_DNA"/>
</dbReference>
<dbReference type="RefSeq" id="WP_012621623.1">
    <property type="nucleotide sequence ID" value="NC_011852.1"/>
</dbReference>
<dbReference type="SMR" id="B8F3L6"/>
<dbReference type="STRING" id="557723.HAPS_0226"/>
<dbReference type="KEGG" id="hap:HAPS_0226"/>
<dbReference type="PATRIC" id="fig|557723.8.peg.234"/>
<dbReference type="HOGENOM" id="CLU_005314_3_0_6"/>
<dbReference type="Proteomes" id="UP000006743">
    <property type="component" value="Chromosome"/>
</dbReference>
<dbReference type="GO" id="GO:0031522">
    <property type="term" value="C:cell envelope Sec protein transport complex"/>
    <property type="evidence" value="ECO:0007669"/>
    <property type="project" value="TreeGrafter"/>
</dbReference>
<dbReference type="GO" id="GO:0005829">
    <property type="term" value="C:cytosol"/>
    <property type="evidence" value="ECO:0007669"/>
    <property type="project" value="TreeGrafter"/>
</dbReference>
<dbReference type="GO" id="GO:0005886">
    <property type="term" value="C:plasma membrane"/>
    <property type="evidence" value="ECO:0007669"/>
    <property type="project" value="UniProtKB-SubCell"/>
</dbReference>
<dbReference type="GO" id="GO:0005524">
    <property type="term" value="F:ATP binding"/>
    <property type="evidence" value="ECO:0007669"/>
    <property type="project" value="UniProtKB-UniRule"/>
</dbReference>
<dbReference type="GO" id="GO:0046872">
    <property type="term" value="F:metal ion binding"/>
    <property type="evidence" value="ECO:0007669"/>
    <property type="project" value="UniProtKB-KW"/>
</dbReference>
<dbReference type="GO" id="GO:0008564">
    <property type="term" value="F:protein-exporting ATPase activity"/>
    <property type="evidence" value="ECO:0007669"/>
    <property type="project" value="UniProtKB-EC"/>
</dbReference>
<dbReference type="GO" id="GO:0065002">
    <property type="term" value="P:intracellular protein transmembrane transport"/>
    <property type="evidence" value="ECO:0007669"/>
    <property type="project" value="UniProtKB-UniRule"/>
</dbReference>
<dbReference type="GO" id="GO:0017038">
    <property type="term" value="P:protein import"/>
    <property type="evidence" value="ECO:0007669"/>
    <property type="project" value="InterPro"/>
</dbReference>
<dbReference type="GO" id="GO:0006605">
    <property type="term" value="P:protein targeting"/>
    <property type="evidence" value="ECO:0007669"/>
    <property type="project" value="UniProtKB-UniRule"/>
</dbReference>
<dbReference type="GO" id="GO:0043952">
    <property type="term" value="P:protein transport by the Sec complex"/>
    <property type="evidence" value="ECO:0007669"/>
    <property type="project" value="TreeGrafter"/>
</dbReference>
<dbReference type="CDD" id="cd17928">
    <property type="entry name" value="DEXDc_SecA"/>
    <property type="match status" value="1"/>
</dbReference>
<dbReference type="CDD" id="cd18803">
    <property type="entry name" value="SF2_C_secA"/>
    <property type="match status" value="1"/>
</dbReference>
<dbReference type="FunFam" id="1.10.3060.10:FF:000001">
    <property type="entry name" value="Preprotein translocase subunit SecA"/>
    <property type="match status" value="1"/>
</dbReference>
<dbReference type="FunFam" id="3.40.50.300:FF:000113">
    <property type="entry name" value="Preprotein translocase subunit SecA"/>
    <property type="match status" value="1"/>
</dbReference>
<dbReference type="FunFam" id="3.90.1440.10:FF:000001">
    <property type="entry name" value="Preprotein translocase subunit SecA"/>
    <property type="match status" value="1"/>
</dbReference>
<dbReference type="Gene3D" id="1.10.3060.10">
    <property type="entry name" value="Helical scaffold and wing domains of SecA"/>
    <property type="match status" value="1"/>
</dbReference>
<dbReference type="Gene3D" id="3.40.50.300">
    <property type="entry name" value="P-loop containing nucleotide triphosphate hydrolases"/>
    <property type="match status" value="2"/>
</dbReference>
<dbReference type="Gene3D" id="3.90.1440.10">
    <property type="entry name" value="SecA, preprotein cross-linking domain"/>
    <property type="match status" value="1"/>
</dbReference>
<dbReference type="HAMAP" id="MF_01382">
    <property type="entry name" value="SecA"/>
    <property type="match status" value="1"/>
</dbReference>
<dbReference type="InterPro" id="IPR014001">
    <property type="entry name" value="Helicase_ATP-bd"/>
</dbReference>
<dbReference type="InterPro" id="IPR001650">
    <property type="entry name" value="Helicase_C-like"/>
</dbReference>
<dbReference type="InterPro" id="IPR027417">
    <property type="entry name" value="P-loop_NTPase"/>
</dbReference>
<dbReference type="InterPro" id="IPR004027">
    <property type="entry name" value="SEC_C_motif"/>
</dbReference>
<dbReference type="InterPro" id="IPR000185">
    <property type="entry name" value="SecA"/>
</dbReference>
<dbReference type="InterPro" id="IPR020937">
    <property type="entry name" value="SecA_CS"/>
</dbReference>
<dbReference type="InterPro" id="IPR011115">
    <property type="entry name" value="SecA_DEAD"/>
</dbReference>
<dbReference type="InterPro" id="IPR014018">
    <property type="entry name" value="SecA_motor_DEAD"/>
</dbReference>
<dbReference type="InterPro" id="IPR011130">
    <property type="entry name" value="SecA_preprotein_X-link_dom"/>
</dbReference>
<dbReference type="InterPro" id="IPR044722">
    <property type="entry name" value="SecA_SF2_C"/>
</dbReference>
<dbReference type="InterPro" id="IPR011116">
    <property type="entry name" value="SecA_Wing/Scaffold"/>
</dbReference>
<dbReference type="InterPro" id="IPR036266">
    <property type="entry name" value="SecA_Wing/Scaffold_sf"/>
</dbReference>
<dbReference type="InterPro" id="IPR036670">
    <property type="entry name" value="SecA_X-link_sf"/>
</dbReference>
<dbReference type="NCBIfam" id="NF009538">
    <property type="entry name" value="PRK12904.1"/>
    <property type="match status" value="1"/>
</dbReference>
<dbReference type="NCBIfam" id="TIGR00963">
    <property type="entry name" value="secA"/>
    <property type="match status" value="1"/>
</dbReference>
<dbReference type="PANTHER" id="PTHR30612:SF0">
    <property type="entry name" value="CHLOROPLAST PROTEIN-TRANSPORTING ATPASE"/>
    <property type="match status" value="1"/>
</dbReference>
<dbReference type="PANTHER" id="PTHR30612">
    <property type="entry name" value="SECA INNER MEMBRANE COMPONENT OF SEC PROTEIN SECRETION SYSTEM"/>
    <property type="match status" value="1"/>
</dbReference>
<dbReference type="Pfam" id="PF21090">
    <property type="entry name" value="P-loop_SecA"/>
    <property type="match status" value="1"/>
</dbReference>
<dbReference type="Pfam" id="PF02810">
    <property type="entry name" value="SEC-C"/>
    <property type="match status" value="1"/>
</dbReference>
<dbReference type="Pfam" id="PF07517">
    <property type="entry name" value="SecA_DEAD"/>
    <property type="match status" value="1"/>
</dbReference>
<dbReference type="Pfam" id="PF01043">
    <property type="entry name" value="SecA_PP_bind"/>
    <property type="match status" value="1"/>
</dbReference>
<dbReference type="Pfam" id="PF07516">
    <property type="entry name" value="SecA_SW"/>
    <property type="match status" value="1"/>
</dbReference>
<dbReference type="PRINTS" id="PR00906">
    <property type="entry name" value="SECA"/>
</dbReference>
<dbReference type="SMART" id="SM00957">
    <property type="entry name" value="SecA_DEAD"/>
    <property type="match status" value="1"/>
</dbReference>
<dbReference type="SMART" id="SM00958">
    <property type="entry name" value="SecA_PP_bind"/>
    <property type="match status" value="1"/>
</dbReference>
<dbReference type="SUPFAM" id="SSF81886">
    <property type="entry name" value="Helical scaffold and wing domains of SecA"/>
    <property type="match status" value="1"/>
</dbReference>
<dbReference type="SUPFAM" id="SSF52540">
    <property type="entry name" value="P-loop containing nucleoside triphosphate hydrolases"/>
    <property type="match status" value="2"/>
</dbReference>
<dbReference type="SUPFAM" id="SSF81767">
    <property type="entry name" value="Pre-protein crosslinking domain of SecA"/>
    <property type="match status" value="1"/>
</dbReference>
<dbReference type="PROSITE" id="PS01312">
    <property type="entry name" value="SECA"/>
    <property type="match status" value="1"/>
</dbReference>
<dbReference type="PROSITE" id="PS51196">
    <property type="entry name" value="SECA_MOTOR_DEAD"/>
    <property type="match status" value="1"/>
</dbReference>